<gene>
    <name evidence="1" type="primary">rnfE</name>
    <name type="ordered locus">PA14_18890</name>
</gene>
<dbReference type="EC" id="7.-.-.-" evidence="1"/>
<dbReference type="EMBL" id="CP000438">
    <property type="protein sequence ID" value="ABJ12747.1"/>
    <property type="molecule type" value="Genomic_DNA"/>
</dbReference>
<dbReference type="RefSeq" id="WP_003092049.1">
    <property type="nucleotide sequence ID" value="NZ_CP034244.1"/>
</dbReference>
<dbReference type="SMR" id="Q02QY3"/>
<dbReference type="KEGG" id="pau:PA14_18890"/>
<dbReference type="PseudoCAP" id="PA14_18890"/>
<dbReference type="HOGENOM" id="CLU_046659_1_0_6"/>
<dbReference type="BioCyc" id="PAER208963:G1G74-1557-MONOMER"/>
<dbReference type="Proteomes" id="UP000000653">
    <property type="component" value="Chromosome"/>
</dbReference>
<dbReference type="GO" id="GO:0005886">
    <property type="term" value="C:plasma membrane"/>
    <property type="evidence" value="ECO:0007669"/>
    <property type="project" value="UniProtKB-SubCell"/>
</dbReference>
<dbReference type="GO" id="GO:0022900">
    <property type="term" value="P:electron transport chain"/>
    <property type="evidence" value="ECO:0007669"/>
    <property type="project" value="UniProtKB-UniRule"/>
</dbReference>
<dbReference type="HAMAP" id="MF_00478">
    <property type="entry name" value="RsxE_RnfE"/>
    <property type="match status" value="1"/>
</dbReference>
<dbReference type="InterPro" id="IPR003667">
    <property type="entry name" value="NqrDE/RnfAE"/>
</dbReference>
<dbReference type="InterPro" id="IPR010968">
    <property type="entry name" value="RnfE"/>
</dbReference>
<dbReference type="NCBIfam" id="NF009070">
    <property type="entry name" value="PRK12405.1"/>
    <property type="match status" value="1"/>
</dbReference>
<dbReference type="NCBIfam" id="TIGR01948">
    <property type="entry name" value="rnfE"/>
    <property type="match status" value="1"/>
</dbReference>
<dbReference type="PANTHER" id="PTHR30586">
    <property type="entry name" value="ELECTRON TRANSPORT COMPLEX PROTEIN RNFE"/>
    <property type="match status" value="1"/>
</dbReference>
<dbReference type="PANTHER" id="PTHR30586:SF0">
    <property type="entry name" value="ION-TRANSLOCATING OXIDOREDUCTASE COMPLEX SUBUNIT E"/>
    <property type="match status" value="1"/>
</dbReference>
<dbReference type="Pfam" id="PF02508">
    <property type="entry name" value="Rnf-Nqr"/>
    <property type="match status" value="1"/>
</dbReference>
<dbReference type="PIRSF" id="PIRSF006102">
    <property type="entry name" value="NQR_DE"/>
    <property type="match status" value="1"/>
</dbReference>
<protein>
    <recommendedName>
        <fullName evidence="1">Ion-translocating oxidoreductase complex subunit E</fullName>
        <ecNumber evidence="1">7.-.-.-</ecNumber>
    </recommendedName>
    <alternativeName>
        <fullName evidence="1">Rnf electron transport complex subunit E</fullName>
    </alternativeName>
</protein>
<sequence length="238" mass="25482">MSEQDFREIARNGLWRNNPGLVQLLGLCPLLGTSNSTVNALGLGLATMLVLACSNAAVSLVRGAVSEAIRLPAFVMIIAALTTCIELLMQAWTYELYQVLGIFIPLITTNCVILGRAEAFAAKNGVLRASFDGLLMGLGFALVLLVLGGLRELLGQGTLLADMHLLFGPAAADWKIQPFPQYQGFLLAILPPGAFIMLGLLIALKNRIDESLAERAKVQAGDVPATQRQRVRVTGVIE</sequence>
<name>RNFE_PSEAB</name>
<organism>
    <name type="scientific">Pseudomonas aeruginosa (strain UCBPP-PA14)</name>
    <dbReference type="NCBI Taxonomy" id="208963"/>
    <lineage>
        <taxon>Bacteria</taxon>
        <taxon>Pseudomonadati</taxon>
        <taxon>Pseudomonadota</taxon>
        <taxon>Gammaproteobacteria</taxon>
        <taxon>Pseudomonadales</taxon>
        <taxon>Pseudomonadaceae</taxon>
        <taxon>Pseudomonas</taxon>
    </lineage>
</organism>
<evidence type="ECO:0000255" key="1">
    <source>
        <dbReference type="HAMAP-Rule" id="MF_00478"/>
    </source>
</evidence>
<proteinExistence type="inferred from homology"/>
<reference key="1">
    <citation type="journal article" date="2006" name="Genome Biol.">
        <title>Genomic analysis reveals that Pseudomonas aeruginosa virulence is combinatorial.</title>
        <authorList>
            <person name="Lee D.G."/>
            <person name="Urbach J.M."/>
            <person name="Wu G."/>
            <person name="Liberati N.T."/>
            <person name="Feinbaum R.L."/>
            <person name="Miyata S."/>
            <person name="Diggins L.T."/>
            <person name="He J."/>
            <person name="Saucier M."/>
            <person name="Deziel E."/>
            <person name="Friedman L."/>
            <person name="Li L."/>
            <person name="Grills G."/>
            <person name="Montgomery K."/>
            <person name="Kucherlapati R."/>
            <person name="Rahme L.G."/>
            <person name="Ausubel F.M."/>
        </authorList>
    </citation>
    <scope>NUCLEOTIDE SEQUENCE [LARGE SCALE GENOMIC DNA]</scope>
    <source>
        <strain>UCBPP-PA14</strain>
    </source>
</reference>
<accession>Q02QY3</accession>
<feature type="chain" id="PRO_1000014097" description="Ion-translocating oxidoreductase complex subunit E">
    <location>
        <begin position="1"/>
        <end position="238"/>
    </location>
</feature>
<feature type="transmembrane region" description="Helical" evidence="1">
    <location>
        <begin position="41"/>
        <end position="61"/>
    </location>
</feature>
<feature type="transmembrane region" description="Helical" evidence="1">
    <location>
        <begin position="71"/>
        <end position="91"/>
    </location>
</feature>
<feature type="transmembrane region" description="Helical" evidence="1">
    <location>
        <begin position="95"/>
        <end position="115"/>
    </location>
</feature>
<feature type="transmembrane region" description="Helical" evidence="1">
    <location>
        <begin position="130"/>
        <end position="150"/>
    </location>
</feature>
<feature type="transmembrane region" description="Helical" evidence="1">
    <location>
        <begin position="184"/>
        <end position="204"/>
    </location>
</feature>
<comment type="function">
    <text evidence="1">Part of a membrane-bound complex that couples electron transfer with translocation of ions across the membrane.</text>
</comment>
<comment type="subunit">
    <text evidence="1">The complex is composed of six subunits: RnfA, RnfB, RnfC, RnfD, RnfE and RnfG.</text>
</comment>
<comment type="subcellular location">
    <subcellularLocation>
        <location evidence="1">Cell inner membrane</location>
        <topology evidence="1">Multi-pass membrane protein</topology>
    </subcellularLocation>
</comment>
<comment type="similarity">
    <text evidence="1">Belongs to the NqrDE/RnfAE family.</text>
</comment>
<keyword id="KW-0997">Cell inner membrane</keyword>
<keyword id="KW-1003">Cell membrane</keyword>
<keyword id="KW-0249">Electron transport</keyword>
<keyword id="KW-0472">Membrane</keyword>
<keyword id="KW-1278">Translocase</keyword>
<keyword id="KW-0812">Transmembrane</keyword>
<keyword id="KW-1133">Transmembrane helix</keyword>
<keyword id="KW-0813">Transport</keyword>